<name>SYQ_ECO27</name>
<comment type="catalytic activity">
    <reaction evidence="1">
        <text>tRNA(Gln) + L-glutamine + ATP = L-glutaminyl-tRNA(Gln) + AMP + diphosphate</text>
        <dbReference type="Rhea" id="RHEA:20121"/>
        <dbReference type="Rhea" id="RHEA-COMP:9662"/>
        <dbReference type="Rhea" id="RHEA-COMP:9681"/>
        <dbReference type="ChEBI" id="CHEBI:30616"/>
        <dbReference type="ChEBI" id="CHEBI:33019"/>
        <dbReference type="ChEBI" id="CHEBI:58359"/>
        <dbReference type="ChEBI" id="CHEBI:78442"/>
        <dbReference type="ChEBI" id="CHEBI:78521"/>
        <dbReference type="ChEBI" id="CHEBI:456215"/>
        <dbReference type="EC" id="6.1.1.18"/>
    </reaction>
</comment>
<comment type="subunit">
    <text evidence="1">Monomer.</text>
</comment>
<comment type="subcellular location">
    <subcellularLocation>
        <location evidence="1">Cytoplasm</location>
    </subcellularLocation>
</comment>
<comment type="similarity">
    <text evidence="1">Belongs to the class-I aminoacyl-tRNA synthetase family.</text>
</comment>
<gene>
    <name evidence="1" type="primary">glnS</name>
    <name type="ordered locus">E2348C_0571</name>
</gene>
<protein>
    <recommendedName>
        <fullName evidence="1">Glutamine--tRNA ligase</fullName>
        <ecNumber evidence="1">6.1.1.18</ecNumber>
    </recommendedName>
    <alternativeName>
        <fullName evidence="1">Glutaminyl-tRNA synthetase</fullName>
        <shortName evidence="1">GlnRS</shortName>
    </alternativeName>
</protein>
<keyword id="KW-0030">Aminoacyl-tRNA synthetase</keyword>
<keyword id="KW-0067">ATP-binding</keyword>
<keyword id="KW-0963">Cytoplasm</keyword>
<keyword id="KW-0436">Ligase</keyword>
<keyword id="KW-0547">Nucleotide-binding</keyword>
<keyword id="KW-0648">Protein biosynthesis</keyword>
<keyword id="KW-1185">Reference proteome</keyword>
<evidence type="ECO:0000255" key="1">
    <source>
        <dbReference type="HAMAP-Rule" id="MF_00126"/>
    </source>
</evidence>
<reference key="1">
    <citation type="journal article" date="2009" name="J. Bacteriol.">
        <title>Complete genome sequence and comparative genome analysis of enteropathogenic Escherichia coli O127:H6 strain E2348/69.</title>
        <authorList>
            <person name="Iguchi A."/>
            <person name="Thomson N.R."/>
            <person name="Ogura Y."/>
            <person name="Saunders D."/>
            <person name="Ooka T."/>
            <person name="Henderson I.R."/>
            <person name="Harris D."/>
            <person name="Asadulghani M."/>
            <person name="Kurokawa K."/>
            <person name="Dean P."/>
            <person name="Kenny B."/>
            <person name="Quail M.A."/>
            <person name="Thurston S."/>
            <person name="Dougan G."/>
            <person name="Hayashi T."/>
            <person name="Parkhill J."/>
            <person name="Frankel G."/>
        </authorList>
    </citation>
    <scope>NUCLEOTIDE SEQUENCE [LARGE SCALE GENOMIC DNA]</scope>
    <source>
        <strain>E2348/69 / EPEC</strain>
    </source>
</reference>
<feature type="chain" id="PRO_1000199095" description="Glutamine--tRNA ligase">
    <location>
        <begin position="1"/>
        <end position="554"/>
    </location>
</feature>
<feature type="region of interest" description="Interaction with tRNA" evidence="1">
    <location>
        <begin position="317"/>
        <end position="324"/>
    </location>
</feature>
<feature type="short sequence motif" description="'HIGH' region" evidence="1">
    <location>
        <begin position="34"/>
        <end position="44"/>
    </location>
</feature>
<feature type="short sequence motif" description="'KMSKS' region" evidence="1">
    <location>
        <begin position="268"/>
        <end position="272"/>
    </location>
</feature>
<feature type="binding site" evidence="1">
    <location>
        <begin position="35"/>
        <end position="37"/>
    </location>
    <ligand>
        <name>ATP</name>
        <dbReference type="ChEBI" id="CHEBI:30616"/>
    </ligand>
</feature>
<feature type="binding site" evidence="1">
    <location>
        <begin position="41"/>
        <end position="47"/>
    </location>
    <ligand>
        <name>ATP</name>
        <dbReference type="ChEBI" id="CHEBI:30616"/>
    </ligand>
</feature>
<feature type="binding site" evidence="1">
    <location>
        <position position="67"/>
    </location>
    <ligand>
        <name>L-glutamine</name>
        <dbReference type="ChEBI" id="CHEBI:58359"/>
    </ligand>
</feature>
<feature type="binding site" evidence="1">
    <location>
        <position position="212"/>
    </location>
    <ligand>
        <name>L-glutamine</name>
        <dbReference type="ChEBI" id="CHEBI:58359"/>
    </ligand>
</feature>
<feature type="binding site" evidence="1">
    <location>
        <position position="231"/>
    </location>
    <ligand>
        <name>ATP</name>
        <dbReference type="ChEBI" id="CHEBI:30616"/>
    </ligand>
</feature>
<feature type="binding site" evidence="1">
    <location>
        <begin position="261"/>
        <end position="262"/>
    </location>
    <ligand>
        <name>ATP</name>
        <dbReference type="ChEBI" id="CHEBI:30616"/>
    </ligand>
</feature>
<feature type="binding site" evidence="1">
    <location>
        <begin position="269"/>
        <end position="271"/>
    </location>
    <ligand>
        <name>ATP</name>
        <dbReference type="ChEBI" id="CHEBI:30616"/>
    </ligand>
</feature>
<organism>
    <name type="scientific">Escherichia coli O127:H6 (strain E2348/69 / EPEC)</name>
    <dbReference type="NCBI Taxonomy" id="574521"/>
    <lineage>
        <taxon>Bacteria</taxon>
        <taxon>Pseudomonadati</taxon>
        <taxon>Pseudomonadota</taxon>
        <taxon>Gammaproteobacteria</taxon>
        <taxon>Enterobacterales</taxon>
        <taxon>Enterobacteriaceae</taxon>
        <taxon>Escherichia</taxon>
    </lineage>
</organism>
<dbReference type="EC" id="6.1.1.18" evidence="1"/>
<dbReference type="EMBL" id="FM180568">
    <property type="protein sequence ID" value="CAS08119.1"/>
    <property type="molecule type" value="Genomic_DNA"/>
</dbReference>
<dbReference type="RefSeq" id="WP_001287134.1">
    <property type="nucleotide sequence ID" value="NC_011601.1"/>
</dbReference>
<dbReference type="SMR" id="B7UKW1"/>
<dbReference type="KEGG" id="ecg:E2348C_0571"/>
<dbReference type="HOGENOM" id="CLU_001882_2_3_6"/>
<dbReference type="Proteomes" id="UP000008205">
    <property type="component" value="Chromosome"/>
</dbReference>
<dbReference type="GO" id="GO:0005829">
    <property type="term" value="C:cytosol"/>
    <property type="evidence" value="ECO:0007669"/>
    <property type="project" value="TreeGrafter"/>
</dbReference>
<dbReference type="GO" id="GO:0005524">
    <property type="term" value="F:ATP binding"/>
    <property type="evidence" value="ECO:0007669"/>
    <property type="project" value="UniProtKB-UniRule"/>
</dbReference>
<dbReference type="GO" id="GO:0004819">
    <property type="term" value="F:glutamine-tRNA ligase activity"/>
    <property type="evidence" value="ECO:0007669"/>
    <property type="project" value="UniProtKB-UniRule"/>
</dbReference>
<dbReference type="GO" id="GO:0006425">
    <property type="term" value="P:glutaminyl-tRNA aminoacylation"/>
    <property type="evidence" value="ECO:0007669"/>
    <property type="project" value="InterPro"/>
</dbReference>
<dbReference type="GO" id="GO:0006424">
    <property type="term" value="P:glutamyl-tRNA aminoacylation"/>
    <property type="evidence" value="ECO:0007669"/>
    <property type="project" value="UniProtKB-UniRule"/>
</dbReference>
<dbReference type="CDD" id="cd00807">
    <property type="entry name" value="GlnRS_core"/>
    <property type="match status" value="1"/>
</dbReference>
<dbReference type="FunFam" id="1.10.1160.10:FF:000001">
    <property type="entry name" value="Glutamine--tRNA ligase"/>
    <property type="match status" value="1"/>
</dbReference>
<dbReference type="FunFam" id="2.40.240.10:FF:000001">
    <property type="entry name" value="Glutamine--tRNA ligase"/>
    <property type="match status" value="1"/>
</dbReference>
<dbReference type="FunFam" id="2.40.240.10:FF:000003">
    <property type="entry name" value="Glutamine--tRNA ligase"/>
    <property type="match status" value="1"/>
</dbReference>
<dbReference type="FunFam" id="3.90.800.10:FF:000001">
    <property type="entry name" value="Glutamine--tRNA ligase"/>
    <property type="match status" value="1"/>
</dbReference>
<dbReference type="FunFam" id="3.40.50.620:FF:000037">
    <property type="entry name" value="Glutamine--tRNA ligase cytoplasmic"/>
    <property type="match status" value="1"/>
</dbReference>
<dbReference type="Gene3D" id="1.10.1160.10">
    <property type="entry name" value="Glutamyl-trna Synthetase, Domain 2"/>
    <property type="match status" value="1"/>
</dbReference>
<dbReference type="Gene3D" id="3.90.800.10">
    <property type="entry name" value="Glutamyl-tRNA Synthetase, Domain 3"/>
    <property type="match status" value="1"/>
</dbReference>
<dbReference type="Gene3D" id="3.40.50.620">
    <property type="entry name" value="HUPs"/>
    <property type="match status" value="1"/>
</dbReference>
<dbReference type="Gene3D" id="2.40.240.10">
    <property type="entry name" value="Ribosomal Protein L25, Chain P"/>
    <property type="match status" value="2"/>
</dbReference>
<dbReference type="HAMAP" id="MF_00126">
    <property type="entry name" value="Gln_tRNA_synth"/>
    <property type="match status" value="1"/>
</dbReference>
<dbReference type="InterPro" id="IPR001412">
    <property type="entry name" value="aa-tRNA-synth_I_CS"/>
</dbReference>
<dbReference type="InterPro" id="IPR004514">
    <property type="entry name" value="Gln-tRNA-synth"/>
</dbReference>
<dbReference type="InterPro" id="IPR050132">
    <property type="entry name" value="Gln/Glu-tRNA_Ligase"/>
</dbReference>
<dbReference type="InterPro" id="IPR022861">
    <property type="entry name" value="Gln_tRNA_ligase_bac"/>
</dbReference>
<dbReference type="InterPro" id="IPR000924">
    <property type="entry name" value="Glu/Gln-tRNA-synth"/>
</dbReference>
<dbReference type="InterPro" id="IPR020058">
    <property type="entry name" value="Glu/Gln-tRNA-synth_Ib_cat-dom"/>
</dbReference>
<dbReference type="InterPro" id="IPR020059">
    <property type="entry name" value="Glu/Gln-tRNA-synth_Ib_codon-bd"/>
</dbReference>
<dbReference type="InterPro" id="IPR020061">
    <property type="entry name" value="Glu_tRNA_lig_a-bdl"/>
</dbReference>
<dbReference type="InterPro" id="IPR020056">
    <property type="entry name" value="Rbsml_bL25/Gln-tRNA_synth_N"/>
</dbReference>
<dbReference type="InterPro" id="IPR011035">
    <property type="entry name" value="Ribosomal_bL25/Gln-tRNA_synth"/>
</dbReference>
<dbReference type="InterPro" id="IPR014729">
    <property type="entry name" value="Rossmann-like_a/b/a_fold"/>
</dbReference>
<dbReference type="InterPro" id="IPR049437">
    <property type="entry name" value="tRNA-synt_1c_C2"/>
</dbReference>
<dbReference type="NCBIfam" id="TIGR00440">
    <property type="entry name" value="glnS"/>
    <property type="match status" value="1"/>
</dbReference>
<dbReference type="NCBIfam" id="NF011291">
    <property type="entry name" value="PRK14703.1"/>
    <property type="match status" value="1"/>
</dbReference>
<dbReference type="PANTHER" id="PTHR43097:SF5">
    <property type="entry name" value="GLUTAMATE--TRNA LIGASE"/>
    <property type="match status" value="1"/>
</dbReference>
<dbReference type="PANTHER" id="PTHR43097">
    <property type="entry name" value="GLUTAMINE-TRNA LIGASE"/>
    <property type="match status" value="1"/>
</dbReference>
<dbReference type="Pfam" id="PF00749">
    <property type="entry name" value="tRNA-synt_1c"/>
    <property type="match status" value="1"/>
</dbReference>
<dbReference type="Pfam" id="PF03950">
    <property type="entry name" value="tRNA-synt_1c_C"/>
    <property type="match status" value="1"/>
</dbReference>
<dbReference type="Pfam" id="PF20974">
    <property type="entry name" value="tRNA-synt_1c_C2"/>
    <property type="match status" value="1"/>
</dbReference>
<dbReference type="PRINTS" id="PR00987">
    <property type="entry name" value="TRNASYNTHGLU"/>
</dbReference>
<dbReference type="SUPFAM" id="SSF52374">
    <property type="entry name" value="Nucleotidylyl transferase"/>
    <property type="match status" value="1"/>
</dbReference>
<dbReference type="SUPFAM" id="SSF50715">
    <property type="entry name" value="Ribosomal protein L25-like"/>
    <property type="match status" value="1"/>
</dbReference>
<dbReference type="PROSITE" id="PS00178">
    <property type="entry name" value="AA_TRNA_LIGASE_I"/>
    <property type="match status" value="1"/>
</dbReference>
<sequence>MSEAEARPTNFIRQIIDEDLASGKHTTVHTRFPPEPNGYLHIGHAKSICLNFGIAQDYKGQCNLRFDDTNPVKEDIEYVDSIKNDVEWLGFHWSGNVRYSSDYFDQLHAYAIELINKGLAYVDELTPEQIREYRGTLTQPGKNSPYRDRSVEENLALFEKMRTGGFEEGKACLRAKIDMASPFIVMRDPVLYRIKFAEHHQTGNKWCIYPMYDFTHCISDALEGITHSLCTLEFQDNRRLYDWVLDNITIPVHPRQYEFSRLNLEYTVMSKRKLNLLVTDKHVEGWDDPRMPTISGLRRRGYTAASIREFCKRIGVTKQDNTIEMASLESCIREDLNENAPRAMAVIDPVKLVIENYQGEGEMVTMPNHPNKPEMGSRQVPFSGEIWIDRADFREEANKQYKRLVLGKEVRLRNAYVIKAERVEKDAEGNITTIFCTYDADTLSKDPADGRKVKGVIHWVSAAHALPVEIRLYDRLFSVPNPGAADDFLSVINPESLVIKQGFAEPSLKDAVAGKAFQFEREGYFCLDSRHSTAEKPVFNRTVGLRDTWAKVGE</sequence>
<proteinExistence type="inferred from homology"/>
<accession>B7UKW1</accession>